<sequence>MIGLVGKKVGMTRIFTEDGVSIPVTVIEVEANRVTQVKDLANDGYRAVQVTTGAKKANRVTKPEAGHFAKAGVEAGRGLWEFRLAEGEEYTVGQSISVELFADVKKVDVTGTSKGKGFAGTVKRWNFRTQDATHGNSLSHRVPGSIGQNQTPGKVFKGKKMAGQMGNERVTVQSLDVVRVDAERNLLLVKGGVPGATGCDLIVKPAVKA</sequence>
<comment type="function">
    <text evidence="1">One of the primary rRNA binding proteins, it binds directly near the 3'-end of the 23S rRNA, where it nucleates assembly of the 50S subunit.</text>
</comment>
<comment type="subunit">
    <text evidence="1">Part of the 50S ribosomal subunit. Forms a cluster with proteins L14 and L19.</text>
</comment>
<comment type="PTM">
    <text evidence="1">Methylated by PrmB.</text>
</comment>
<comment type="similarity">
    <text evidence="1">Belongs to the universal ribosomal protein uL3 family.</text>
</comment>
<evidence type="ECO:0000255" key="1">
    <source>
        <dbReference type="HAMAP-Rule" id="MF_01325"/>
    </source>
</evidence>
<evidence type="ECO:0000305" key="2"/>
<organism>
    <name type="scientific">Salmonella paratyphi A (strain AKU_12601)</name>
    <dbReference type="NCBI Taxonomy" id="554290"/>
    <lineage>
        <taxon>Bacteria</taxon>
        <taxon>Pseudomonadati</taxon>
        <taxon>Pseudomonadota</taxon>
        <taxon>Gammaproteobacteria</taxon>
        <taxon>Enterobacterales</taxon>
        <taxon>Enterobacteriaceae</taxon>
        <taxon>Salmonella</taxon>
    </lineage>
</organism>
<reference key="1">
    <citation type="journal article" date="2009" name="BMC Genomics">
        <title>Pseudogene accumulation in the evolutionary histories of Salmonella enterica serovars Paratyphi A and Typhi.</title>
        <authorList>
            <person name="Holt K.E."/>
            <person name="Thomson N.R."/>
            <person name="Wain J."/>
            <person name="Langridge G.C."/>
            <person name="Hasan R."/>
            <person name="Bhutta Z.A."/>
            <person name="Quail M.A."/>
            <person name="Norbertczak H."/>
            <person name="Walker D."/>
            <person name="Simmonds M."/>
            <person name="White B."/>
            <person name="Bason N."/>
            <person name="Mungall K."/>
            <person name="Dougan G."/>
            <person name="Parkhill J."/>
        </authorList>
    </citation>
    <scope>NUCLEOTIDE SEQUENCE [LARGE SCALE GENOMIC DNA]</scope>
    <source>
        <strain>AKU_12601</strain>
    </source>
</reference>
<dbReference type="EMBL" id="FM200053">
    <property type="protein sequence ID" value="CAR61336.1"/>
    <property type="molecule type" value="Genomic_DNA"/>
</dbReference>
<dbReference type="RefSeq" id="WP_000579838.1">
    <property type="nucleotide sequence ID" value="NC_011147.1"/>
</dbReference>
<dbReference type="SMR" id="B5BGY6"/>
<dbReference type="KEGG" id="sek:SSPA3085"/>
<dbReference type="HOGENOM" id="CLU_044142_4_1_6"/>
<dbReference type="Proteomes" id="UP000001869">
    <property type="component" value="Chromosome"/>
</dbReference>
<dbReference type="GO" id="GO:0022625">
    <property type="term" value="C:cytosolic large ribosomal subunit"/>
    <property type="evidence" value="ECO:0007669"/>
    <property type="project" value="TreeGrafter"/>
</dbReference>
<dbReference type="GO" id="GO:0019843">
    <property type="term" value="F:rRNA binding"/>
    <property type="evidence" value="ECO:0007669"/>
    <property type="project" value="UniProtKB-UniRule"/>
</dbReference>
<dbReference type="GO" id="GO:0003735">
    <property type="term" value="F:structural constituent of ribosome"/>
    <property type="evidence" value="ECO:0007669"/>
    <property type="project" value="InterPro"/>
</dbReference>
<dbReference type="GO" id="GO:0006412">
    <property type="term" value="P:translation"/>
    <property type="evidence" value="ECO:0007669"/>
    <property type="project" value="UniProtKB-UniRule"/>
</dbReference>
<dbReference type="FunFam" id="2.40.30.10:FF:000004">
    <property type="entry name" value="50S ribosomal protein L3"/>
    <property type="match status" value="1"/>
</dbReference>
<dbReference type="FunFam" id="3.30.160.810:FF:000001">
    <property type="entry name" value="50S ribosomal protein L3"/>
    <property type="match status" value="1"/>
</dbReference>
<dbReference type="Gene3D" id="3.30.160.810">
    <property type="match status" value="1"/>
</dbReference>
<dbReference type="Gene3D" id="2.40.30.10">
    <property type="entry name" value="Translation factors"/>
    <property type="match status" value="1"/>
</dbReference>
<dbReference type="HAMAP" id="MF_01325_B">
    <property type="entry name" value="Ribosomal_uL3_B"/>
    <property type="match status" value="1"/>
</dbReference>
<dbReference type="InterPro" id="IPR000597">
    <property type="entry name" value="Ribosomal_uL3"/>
</dbReference>
<dbReference type="InterPro" id="IPR019927">
    <property type="entry name" value="Ribosomal_uL3_bac/org-type"/>
</dbReference>
<dbReference type="InterPro" id="IPR019926">
    <property type="entry name" value="Ribosomal_uL3_CS"/>
</dbReference>
<dbReference type="InterPro" id="IPR009000">
    <property type="entry name" value="Transl_B-barrel_sf"/>
</dbReference>
<dbReference type="NCBIfam" id="TIGR03625">
    <property type="entry name" value="L3_bact"/>
    <property type="match status" value="1"/>
</dbReference>
<dbReference type="PANTHER" id="PTHR11229">
    <property type="entry name" value="50S RIBOSOMAL PROTEIN L3"/>
    <property type="match status" value="1"/>
</dbReference>
<dbReference type="PANTHER" id="PTHR11229:SF16">
    <property type="entry name" value="LARGE RIBOSOMAL SUBUNIT PROTEIN UL3C"/>
    <property type="match status" value="1"/>
</dbReference>
<dbReference type="Pfam" id="PF00297">
    <property type="entry name" value="Ribosomal_L3"/>
    <property type="match status" value="1"/>
</dbReference>
<dbReference type="SUPFAM" id="SSF50447">
    <property type="entry name" value="Translation proteins"/>
    <property type="match status" value="1"/>
</dbReference>
<dbReference type="PROSITE" id="PS00474">
    <property type="entry name" value="RIBOSOMAL_L3"/>
    <property type="match status" value="1"/>
</dbReference>
<feature type="chain" id="PRO_1000141918" description="Large ribosomal subunit protein uL3">
    <location>
        <begin position="1"/>
        <end position="209"/>
    </location>
</feature>
<feature type="modified residue" description="N5-methylglutamine" evidence="1">
    <location>
        <position position="150"/>
    </location>
</feature>
<protein>
    <recommendedName>
        <fullName evidence="1">Large ribosomal subunit protein uL3</fullName>
    </recommendedName>
    <alternativeName>
        <fullName evidence="2">50S ribosomal protein L3</fullName>
    </alternativeName>
</protein>
<name>RL3_SALPK</name>
<keyword id="KW-0488">Methylation</keyword>
<keyword id="KW-0687">Ribonucleoprotein</keyword>
<keyword id="KW-0689">Ribosomal protein</keyword>
<keyword id="KW-0694">RNA-binding</keyword>
<keyword id="KW-0699">rRNA-binding</keyword>
<gene>
    <name evidence="1" type="primary">rplC</name>
    <name type="ordered locus">SSPA3085</name>
</gene>
<proteinExistence type="inferred from homology"/>
<accession>B5BGY6</accession>